<keyword id="KW-0963">Cytoplasm</keyword>
<keyword id="KW-0251">Elongation factor</keyword>
<keyword id="KW-0342">GTP-binding</keyword>
<keyword id="KW-0547">Nucleotide-binding</keyword>
<keyword id="KW-0648">Protein biosynthesis</keyword>
<proteinExistence type="inferred from homology"/>
<sequence length="699" mass="77231">MSRKTPIERYRNIGISAHIDAGKTTTTERILFYTGVNHKIGEVHDGAATMDWMEQEQERGITITSAATTCFWKGMAGKFEEHRINIIDTPGHVDFTIEVERSMRVLDGAVMVYDAVGGVQPQSETVWRQANKYKVPRLAFVNKMDRTGADFLRVRQMMVDRLKANPVVIQIPIGAEEHFQGIVDLVKMKAIIWDEDKGVTFTYGEIPANLTDVCNEYREKLVEAAAEASEELMNKYLEGGELSEEEIKKAIRQRTIAGEIQPMLCGSAFKNKGVQAMLDAVVEYMPAPTDIPPVNGTDEDEAPVTRKADDNEKFSALAFKLMTDPFVGQLTFVRVYSGVLTKGDSVYNPVRGKKERIGRIVQMHANNREEVNEIRAGDIAACVGLKEVTTGETLCDPAAVVTLERMVFPESVISQAVEPKTKADQEKMGIALQRLAQEDPSFRVKTDEESGQTIIAGMGELHLEIIVDRMKREFGVEANVGKPQVAYRETIRKTVEEAEGKFVRQSGGKGQYGHVVLKLEPQEAGKGFEFVDAIKGGVVPREYIPAVEKGVVEALTQGVLAGYPVVDVKVTLHFGSYHDVDSNEMAFKMAAIFGFKEGARKANPVILEPMMAVEVETPEDYAGNVMGDLSSRRGMVQGMDDMIGGGKSIKAEVPLSEMFGYSTTLRSMSQGRATYTMEFKHYAEAPRNVAEAIVAARAK</sequence>
<comment type="function">
    <text evidence="1">Catalyzes the GTP-dependent ribosomal translocation step during translation elongation. During this step, the ribosome changes from the pre-translocational (PRE) to the post-translocational (POST) state as the newly formed A-site-bound peptidyl-tRNA and P-site-bound deacylated tRNA move to the P and E sites, respectively. Catalyzes the coordinated movement of the two tRNA molecules, the mRNA and conformational changes in the ribosome.</text>
</comment>
<comment type="subcellular location">
    <subcellularLocation>
        <location evidence="1">Cytoplasm</location>
    </subcellularLocation>
</comment>
<comment type="similarity">
    <text evidence="1">Belongs to the TRAFAC class translation factor GTPase superfamily. Classic translation factor GTPase family. EF-G/EF-2 subfamily.</text>
</comment>
<feature type="chain" id="PRO_1000202323" description="Elongation factor G">
    <location>
        <begin position="1"/>
        <end position="699"/>
    </location>
</feature>
<feature type="domain" description="tr-type G">
    <location>
        <begin position="8"/>
        <end position="289"/>
    </location>
</feature>
<feature type="binding site" evidence="1">
    <location>
        <begin position="17"/>
        <end position="24"/>
    </location>
    <ligand>
        <name>GTP</name>
        <dbReference type="ChEBI" id="CHEBI:37565"/>
    </ligand>
</feature>
<feature type="binding site" evidence="1">
    <location>
        <begin position="88"/>
        <end position="92"/>
    </location>
    <ligand>
        <name>GTP</name>
        <dbReference type="ChEBI" id="CHEBI:37565"/>
    </ligand>
</feature>
<feature type="binding site" evidence="1">
    <location>
        <begin position="142"/>
        <end position="145"/>
    </location>
    <ligand>
        <name>GTP</name>
        <dbReference type="ChEBI" id="CHEBI:37565"/>
    </ligand>
</feature>
<name>EFG_VARPS</name>
<dbReference type="EMBL" id="CP001635">
    <property type="protein sequence ID" value="ACS21522.1"/>
    <property type="molecule type" value="Genomic_DNA"/>
</dbReference>
<dbReference type="SMR" id="C5CP58"/>
<dbReference type="STRING" id="543728.Vapar_4918"/>
<dbReference type="KEGG" id="vap:Vapar_4918"/>
<dbReference type="eggNOG" id="COG0480">
    <property type="taxonomic scope" value="Bacteria"/>
</dbReference>
<dbReference type="HOGENOM" id="CLU_002794_4_1_4"/>
<dbReference type="OrthoDB" id="9804431at2"/>
<dbReference type="GO" id="GO:0005737">
    <property type="term" value="C:cytoplasm"/>
    <property type="evidence" value="ECO:0007669"/>
    <property type="project" value="UniProtKB-SubCell"/>
</dbReference>
<dbReference type="GO" id="GO:0005525">
    <property type="term" value="F:GTP binding"/>
    <property type="evidence" value="ECO:0007669"/>
    <property type="project" value="UniProtKB-UniRule"/>
</dbReference>
<dbReference type="GO" id="GO:0003924">
    <property type="term" value="F:GTPase activity"/>
    <property type="evidence" value="ECO:0007669"/>
    <property type="project" value="InterPro"/>
</dbReference>
<dbReference type="GO" id="GO:0097216">
    <property type="term" value="F:guanosine tetraphosphate binding"/>
    <property type="evidence" value="ECO:0007669"/>
    <property type="project" value="UniProtKB-ARBA"/>
</dbReference>
<dbReference type="GO" id="GO:0003746">
    <property type="term" value="F:translation elongation factor activity"/>
    <property type="evidence" value="ECO:0007669"/>
    <property type="project" value="UniProtKB-UniRule"/>
</dbReference>
<dbReference type="GO" id="GO:0032790">
    <property type="term" value="P:ribosome disassembly"/>
    <property type="evidence" value="ECO:0007669"/>
    <property type="project" value="TreeGrafter"/>
</dbReference>
<dbReference type="CDD" id="cd01886">
    <property type="entry name" value="EF-G"/>
    <property type="match status" value="1"/>
</dbReference>
<dbReference type="CDD" id="cd16262">
    <property type="entry name" value="EFG_III"/>
    <property type="match status" value="1"/>
</dbReference>
<dbReference type="CDD" id="cd01434">
    <property type="entry name" value="EFG_mtEFG1_IV"/>
    <property type="match status" value="1"/>
</dbReference>
<dbReference type="CDD" id="cd03713">
    <property type="entry name" value="EFG_mtEFG_C"/>
    <property type="match status" value="1"/>
</dbReference>
<dbReference type="CDD" id="cd04088">
    <property type="entry name" value="EFG_mtEFG_II"/>
    <property type="match status" value="1"/>
</dbReference>
<dbReference type="FunFam" id="2.40.30.10:FF:000006">
    <property type="entry name" value="Elongation factor G"/>
    <property type="match status" value="1"/>
</dbReference>
<dbReference type="FunFam" id="3.30.230.10:FF:000003">
    <property type="entry name" value="Elongation factor G"/>
    <property type="match status" value="1"/>
</dbReference>
<dbReference type="FunFam" id="3.30.70.240:FF:000001">
    <property type="entry name" value="Elongation factor G"/>
    <property type="match status" value="1"/>
</dbReference>
<dbReference type="FunFam" id="3.30.70.870:FF:000001">
    <property type="entry name" value="Elongation factor G"/>
    <property type="match status" value="1"/>
</dbReference>
<dbReference type="FunFam" id="3.40.50.300:FF:000029">
    <property type="entry name" value="Elongation factor G"/>
    <property type="match status" value="1"/>
</dbReference>
<dbReference type="Gene3D" id="3.30.230.10">
    <property type="match status" value="1"/>
</dbReference>
<dbReference type="Gene3D" id="3.30.70.240">
    <property type="match status" value="1"/>
</dbReference>
<dbReference type="Gene3D" id="3.30.70.870">
    <property type="entry name" value="Elongation Factor G (Translational Gtpase), domain 3"/>
    <property type="match status" value="1"/>
</dbReference>
<dbReference type="Gene3D" id="3.40.50.300">
    <property type="entry name" value="P-loop containing nucleotide triphosphate hydrolases"/>
    <property type="match status" value="1"/>
</dbReference>
<dbReference type="Gene3D" id="2.40.30.10">
    <property type="entry name" value="Translation factors"/>
    <property type="match status" value="1"/>
</dbReference>
<dbReference type="HAMAP" id="MF_00054_B">
    <property type="entry name" value="EF_G_EF_2_B"/>
    <property type="match status" value="1"/>
</dbReference>
<dbReference type="InterPro" id="IPR041095">
    <property type="entry name" value="EFG_II"/>
</dbReference>
<dbReference type="InterPro" id="IPR009022">
    <property type="entry name" value="EFG_III"/>
</dbReference>
<dbReference type="InterPro" id="IPR035647">
    <property type="entry name" value="EFG_III/V"/>
</dbReference>
<dbReference type="InterPro" id="IPR047872">
    <property type="entry name" value="EFG_IV"/>
</dbReference>
<dbReference type="InterPro" id="IPR035649">
    <property type="entry name" value="EFG_V"/>
</dbReference>
<dbReference type="InterPro" id="IPR000640">
    <property type="entry name" value="EFG_V-like"/>
</dbReference>
<dbReference type="InterPro" id="IPR004161">
    <property type="entry name" value="EFTu-like_2"/>
</dbReference>
<dbReference type="InterPro" id="IPR031157">
    <property type="entry name" value="G_TR_CS"/>
</dbReference>
<dbReference type="InterPro" id="IPR027417">
    <property type="entry name" value="P-loop_NTPase"/>
</dbReference>
<dbReference type="InterPro" id="IPR020568">
    <property type="entry name" value="Ribosomal_Su5_D2-typ_SF"/>
</dbReference>
<dbReference type="InterPro" id="IPR014721">
    <property type="entry name" value="Ribsml_uS5_D2-typ_fold_subgr"/>
</dbReference>
<dbReference type="InterPro" id="IPR005225">
    <property type="entry name" value="Small_GTP-bd"/>
</dbReference>
<dbReference type="InterPro" id="IPR000795">
    <property type="entry name" value="T_Tr_GTP-bd_dom"/>
</dbReference>
<dbReference type="InterPro" id="IPR009000">
    <property type="entry name" value="Transl_B-barrel_sf"/>
</dbReference>
<dbReference type="InterPro" id="IPR004540">
    <property type="entry name" value="Transl_elong_EFG/EF2"/>
</dbReference>
<dbReference type="InterPro" id="IPR005517">
    <property type="entry name" value="Transl_elong_EFG/EF2_IV"/>
</dbReference>
<dbReference type="NCBIfam" id="TIGR00484">
    <property type="entry name" value="EF-G"/>
    <property type="match status" value="1"/>
</dbReference>
<dbReference type="NCBIfam" id="NF009379">
    <property type="entry name" value="PRK12740.1-3"/>
    <property type="match status" value="1"/>
</dbReference>
<dbReference type="NCBIfam" id="NF009381">
    <property type="entry name" value="PRK12740.1-5"/>
    <property type="match status" value="1"/>
</dbReference>
<dbReference type="NCBIfam" id="TIGR00231">
    <property type="entry name" value="small_GTP"/>
    <property type="match status" value="1"/>
</dbReference>
<dbReference type="PANTHER" id="PTHR43261:SF1">
    <property type="entry name" value="RIBOSOME-RELEASING FACTOR 2, MITOCHONDRIAL"/>
    <property type="match status" value="1"/>
</dbReference>
<dbReference type="PANTHER" id="PTHR43261">
    <property type="entry name" value="TRANSLATION ELONGATION FACTOR G-RELATED"/>
    <property type="match status" value="1"/>
</dbReference>
<dbReference type="Pfam" id="PF00679">
    <property type="entry name" value="EFG_C"/>
    <property type="match status" value="1"/>
</dbReference>
<dbReference type="Pfam" id="PF14492">
    <property type="entry name" value="EFG_III"/>
    <property type="match status" value="1"/>
</dbReference>
<dbReference type="Pfam" id="PF03764">
    <property type="entry name" value="EFG_IV"/>
    <property type="match status" value="1"/>
</dbReference>
<dbReference type="Pfam" id="PF00009">
    <property type="entry name" value="GTP_EFTU"/>
    <property type="match status" value="1"/>
</dbReference>
<dbReference type="Pfam" id="PF03144">
    <property type="entry name" value="GTP_EFTU_D2"/>
    <property type="match status" value="1"/>
</dbReference>
<dbReference type="PRINTS" id="PR00315">
    <property type="entry name" value="ELONGATNFCT"/>
</dbReference>
<dbReference type="SMART" id="SM00838">
    <property type="entry name" value="EFG_C"/>
    <property type="match status" value="1"/>
</dbReference>
<dbReference type="SMART" id="SM00889">
    <property type="entry name" value="EFG_IV"/>
    <property type="match status" value="1"/>
</dbReference>
<dbReference type="SUPFAM" id="SSF54980">
    <property type="entry name" value="EF-G C-terminal domain-like"/>
    <property type="match status" value="2"/>
</dbReference>
<dbReference type="SUPFAM" id="SSF52540">
    <property type="entry name" value="P-loop containing nucleoside triphosphate hydrolases"/>
    <property type="match status" value="1"/>
</dbReference>
<dbReference type="SUPFAM" id="SSF54211">
    <property type="entry name" value="Ribosomal protein S5 domain 2-like"/>
    <property type="match status" value="1"/>
</dbReference>
<dbReference type="SUPFAM" id="SSF50447">
    <property type="entry name" value="Translation proteins"/>
    <property type="match status" value="1"/>
</dbReference>
<dbReference type="PROSITE" id="PS00301">
    <property type="entry name" value="G_TR_1"/>
    <property type="match status" value="1"/>
</dbReference>
<dbReference type="PROSITE" id="PS51722">
    <property type="entry name" value="G_TR_2"/>
    <property type="match status" value="1"/>
</dbReference>
<reference key="1">
    <citation type="journal article" date="2011" name="J. Bacteriol.">
        <title>Complete genome sequence of the metabolically versatile plant growth-promoting endophyte, Variovorax paradoxus S110.</title>
        <authorList>
            <person name="Han J.I."/>
            <person name="Choi H.K."/>
            <person name="Lee S.W."/>
            <person name="Orwin P.M."/>
            <person name="Kim J."/>
            <person name="Laroe S.L."/>
            <person name="Kim T.G."/>
            <person name="O'Neil J."/>
            <person name="Leadbetter J.R."/>
            <person name="Lee S.Y."/>
            <person name="Hur C.G."/>
            <person name="Spain J.C."/>
            <person name="Ovchinnikova G."/>
            <person name="Goodwin L."/>
            <person name="Han C."/>
        </authorList>
    </citation>
    <scope>NUCLEOTIDE SEQUENCE [LARGE SCALE GENOMIC DNA]</scope>
    <source>
        <strain>S110</strain>
    </source>
</reference>
<gene>
    <name evidence="1" type="primary">fusA</name>
    <name type="ordered locus">Vapar_4918</name>
</gene>
<evidence type="ECO:0000255" key="1">
    <source>
        <dbReference type="HAMAP-Rule" id="MF_00054"/>
    </source>
</evidence>
<organism>
    <name type="scientific">Variovorax paradoxus (strain S110)</name>
    <dbReference type="NCBI Taxonomy" id="543728"/>
    <lineage>
        <taxon>Bacteria</taxon>
        <taxon>Pseudomonadati</taxon>
        <taxon>Pseudomonadota</taxon>
        <taxon>Betaproteobacteria</taxon>
        <taxon>Burkholderiales</taxon>
        <taxon>Comamonadaceae</taxon>
        <taxon>Variovorax</taxon>
    </lineage>
</organism>
<accession>C5CP58</accession>
<protein>
    <recommendedName>
        <fullName evidence="1">Elongation factor G</fullName>
        <shortName evidence="1">EF-G</shortName>
    </recommendedName>
</protein>